<keyword id="KW-0378">Hydrolase</keyword>
<keyword id="KW-0546">Nucleotide metabolism</keyword>
<keyword id="KW-0547">Nucleotide-binding</keyword>
<reference key="1">
    <citation type="journal article" date="2009" name="PLoS Pathog.">
        <title>Molecular evolutionary consequences of niche restriction in Francisella tularensis, a facultative intracellular pathogen.</title>
        <authorList>
            <person name="Larsson P."/>
            <person name="Elfsmark D."/>
            <person name="Svensson K."/>
            <person name="Wikstroem P."/>
            <person name="Forsman M."/>
            <person name="Brettin T."/>
            <person name="Keim P."/>
            <person name="Johansson A."/>
        </authorList>
    </citation>
    <scope>NUCLEOTIDE SEQUENCE [LARGE SCALE GENOMIC DNA]</scope>
    <source>
        <strain>FSC147</strain>
    </source>
</reference>
<dbReference type="EC" id="3.5.4.13" evidence="1"/>
<dbReference type="EMBL" id="CP000915">
    <property type="protein sequence ID" value="ACD30885.1"/>
    <property type="molecule type" value="Genomic_DNA"/>
</dbReference>
<dbReference type="SMR" id="B2SGM6"/>
<dbReference type="KEGG" id="ftm:FTM_0956"/>
<dbReference type="HOGENOM" id="CLU_087476_4_0_6"/>
<dbReference type="UniPathway" id="UPA00610">
    <property type="reaction ID" value="UER00665"/>
</dbReference>
<dbReference type="GO" id="GO:0008829">
    <property type="term" value="F:dCTP deaminase activity"/>
    <property type="evidence" value="ECO:0007669"/>
    <property type="project" value="UniProtKB-UniRule"/>
</dbReference>
<dbReference type="GO" id="GO:0000166">
    <property type="term" value="F:nucleotide binding"/>
    <property type="evidence" value="ECO:0007669"/>
    <property type="project" value="UniProtKB-KW"/>
</dbReference>
<dbReference type="GO" id="GO:0006226">
    <property type="term" value="P:dUMP biosynthetic process"/>
    <property type="evidence" value="ECO:0007669"/>
    <property type="project" value="UniProtKB-UniPathway"/>
</dbReference>
<dbReference type="GO" id="GO:0006229">
    <property type="term" value="P:dUTP biosynthetic process"/>
    <property type="evidence" value="ECO:0007669"/>
    <property type="project" value="UniProtKB-UniRule"/>
</dbReference>
<dbReference type="GO" id="GO:0015949">
    <property type="term" value="P:nucleobase-containing small molecule interconversion"/>
    <property type="evidence" value="ECO:0007669"/>
    <property type="project" value="TreeGrafter"/>
</dbReference>
<dbReference type="CDD" id="cd07557">
    <property type="entry name" value="trimeric_dUTPase"/>
    <property type="match status" value="1"/>
</dbReference>
<dbReference type="FunFam" id="2.70.40.10:FF:000001">
    <property type="entry name" value="dCTP deaminase"/>
    <property type="match status" value="1"/>
</dbReference>
<dbReference type="Gene3D" id="2.70.40.10">
    <property type="match status" value="1"/>
</dbReference>
<dbReference type="HAMAP" id="MF_00146">
    <property type="entry name" value="dCTP_deaminase"/>
    <property type="match status" value="1"/>
</dbReference>
<dbReference type="InterPro" id="IPR011962">
    <property type="entry name" value="dCTP_deaminase"/>
</dbReference>
<dbReference type="InterPro" id="IPR036157">
    <property type="entry name" value="dUTPase-like_sf"/>
</dbReference>
<dbReference type="InterPro" id="IPR033704">
    <property type="entry name" value="dUTPase_trimeric"/>
</dbReference>
<dbReference type="NCBIfam" id="TIGR02274">
    <property type="entry name" value="dCTP_deam"/>
    <property type="match status" value="1"/>
</dbReference>
<dbReference type="PANTHER" id="PTHR42680">
    <property type="entry name" value="DCTP DEAMINASE"/>
    <property type="match status" value="1"/>
</dbReference>
<dbReference type="PANTHER" id="PTHR42680:SF3">
    <property type="entry name" value="DCTP DEAMINASE"/>
    <property type="match status" value="1"/>
</dbReference>
<dbReference type="Pfam" id="PF22769">
    <property type="entry name" value="DCD"/>
    <property type="match status" value="1"/>
</dbReference>
<dbReference type="SUPFAM" id="SSF51283">
    <property type="entry name" value="dUTPase-like"/>
    <property type="match status" value="1"/>
</dbReference>
<feature type="chain" id="PRO_1000096427" description="dCTP deaminase">
    <location>
        <begin position="1"/>
        <end position="188"/>
    </location>
</feature>
<feature type="active site" description="Proton donor/acceptor" evidence="1">
    <location>
        <position position="137"/>
    </location>
</feature>
<feature type="binding site" evidence="1">
    <location>
        <begin position="111"/>
        <end position="116"/>
    </location>
    <ligand>
        <name>dCTP</name>
        <dbReference type="ChEBI" id="CHEBI:61481"/>
    </ligand>
</feature>
<feature type="binding site" evidence="1">
    <location>
        <begin position="135"/>
        <end position="137"/>
    </location>
    <ligand>
        <name>dCTP</name>
        <dbReference type="ChEBI" id="CHEBI:61481"/>
    </ligand>
</feature>
<feature type="binding site" evidence="1">
    <location>
        <position position="156"/>
    </location>
    <ligand>
        <name>dCTP</name>
        <dbReference type="ChEBI" id="CHEBI:61481"/>
    </ligand>
</feature>
<feature type="binding site" evidence="1">
    <location>
        <position position="170"/>
    </location>
    <ligand>
        <name>dCTP</name>
        <dbReference type="ChEBI" id="CHEBI:61481"/>
    </ligand>
</feature>
<feature type="binding site" evidence="1">
    <location>
        <position position="180"/>
    </location>
    <ligand>
        <name>dCTP</name>
        <dbReference type="ChEBI" id="CHEBI:61481"/>
    </ligand>
</feature>
<proteinExistence type="inferred from homology"/>
<name>DCD_FRATM</name>
<sequence>MTIKSDKWIKKMSQEHNMIEPFEAGQVKVINNQKIVSYGTSSYGYDVRCADEFKIFTNINSSIVDPKNFNDKNFVDFKGDVCIIPPNSFALARTVEKFKIPRDTLVVCLGKSTYARCGIIVNVTPLEPEWEGYVTLEFSNTTPLPAKIYANEGVAQMLFFQSDEECETSYADKGGKYQGQVGVTLPKC</sequence>
<evidence type="ECO:0000255" key="1">
    <source>
        <dbReference type="HAMAP-Rule" id="MF_00146"/>
    </source>
</evidence>
<accession>B2SGM6</accession>
<gene>
    <name evidence="1" type="primary">dcd</name>
    <name type="ordered locus">FTM_0956</name>
</gene>
<protein>
    <recommendedName>
        <fullName evidence="1">dCTP deaminase</fullName>
        <ecNumber evidence="1">3.5.4.13</ecNumber>
    </recommendedName>
    <alternativeName>
        <fullName evidence="1">Deoxycytidine triphosphate deaminase</fullName>
    </alternativeName>
</protein>
<organism>
    <name type="scientific">Francisella tularensis subsp. mediasiatica (strain FSC147)</name>
    <dbReference type="NCBI Taxonomy" id="441952"/>
    <lineage>
        <taxon>Bacteria</taxon>
        <taxon>Pseudomonadati</taxon>
        <taxon>Pseudomonadota</taxon>
        <taxon>Gammaproteobacteria</taxon>
        <taxon>Thiotrichales</taxon>
        <taxon>Francisellaceae</taxon>
        <taxon>Francisella</taxon>
    </lineage>
</organism>
<comment type="function">
    <text evidence="1">Catalyzes the deamination of dCTP to dUTP.</text>
</comment>
<comment type="catalytic activity">
    <reaction evidence="1">
        <text>dCTP + H2O + H(+) = dUTP + NH4(+)</text>
        <dbReference type="Rhea" id="RHEA:22680"/>
        <dbReference type="ChEBI" id="CHEBI:15377"/>
        <dbReference type="ChEBI" id="CHEBI:15378"/>
        <dbReference type="ChEBI" id="CHEBI:28938"/>
        <dbReference type="ChEBI" id="CHEBI:61481"/>
        <dbReference type="ChEBI" id="CHEBI:61555"/>
        <dbReference type="EC" id="3.5.4.13"/>
    </reaction>
</comment>
<comment type="pathway">
    <text evidence="1">Pyrimidine metabolism; dUMP biosynthesis; dUMP from dCTP (dUTP route): step 1/2.</text>
</comment>
<comment type="subunit">
    <text evidence="1">Homotrimer.</text>
</comment>
<comment type="similarity">
    <text evidence="1">Belongs to the dCTP deaminase family.</text>
</comment>